<proteinExistence type="inferred from homology"/>
<feature type="chain" id="PRO_1000052038" description="Large ribosomal subunit protein uL3">
    <location>
        <begin position="1"/>
        <end position="212"/>
    </location>
</feature>
<organism>
    <name type="scientific">Acetivibrio thermocellus (strain ATCC 27405 / DSM 1237 / JCM 9322 / NBRC 103400 / NCIMB 10682 / NRRL B-4536 / VPI 7372)</name>
    <name type="common">Clostridium thermocellum</name>
    <dbReference type="NCBI Taxonomy" id="203119"/>
    <lineage>
        <taxon>Bacteria</taxon>
        <taxon>Bacillati</taxon>
        <taxon>Bacillota</taxon>
        <taxon>Clostridia</taxon>
        <taxon>Eubacteriales</taxon>
        <taxon>Oscillospiraceae</taxon>
        <taxon>Acetivibrio</taxon>
    </lineage>
</organism>
<dbReference type="EMBL" id="CP000568">
    <property type="protein sequence ID" value="ABN54101.1"/>
    <property type="molecule type" value="Genomic_DNA"/>
</dbReference>
<dbReference type="RefSeq" id="WP_003514621.1">
    <property type="nucleotide sequence ID" value="NC_009012.1"/>
</dbReference>
<dbReference type="SMR" id="A3DJH2"/>
<dbReference type="STRING" id="203119.Cthe_2903"/>
<dbReference type="GeneID" id="35804370"/>
<dbReference type="KEGG" id="cth:Cthe_2903"/>
<dbReference type="eggNOG" id="COG0087">
    <property type="taxonomic scope" value="Bacteria"/>
</dbReference>
<dbReference type="HOGENOM" id="CLU_044142_4_1_9"/>
<dbReference type="OrthoDB" id="9806135at2"/>
<dbReference type="Proteomes" id="UP000002145">
    <property type="component" value="Chromosome"/>
</dbReference>
<dbReference type="GO" id="GO:0022625">
    <property type="term" value="C:cytosolic large ribosomal subunit"/>
    <property type="evidence" value="ECO:0007669"/>
    <property type="project" value="TreeGrafter"/>
</dbReference>
<dbReference type="GO" id="GO:0019843">
    <property type="term" value="F:rRNA binding"/>
    <property type="evidence" value="ECO:0007669"/>
    <property type="project" value="UniProtKB-UniRule"/>
</dbReference>
<dbReference type="GO" id="GO:0003735">
    <property type="term" value="F:structural constituent of ribosome"/>
    <property type="evidence" value="ECO:0007669"/>
    <property type="project" value="InterPro"/>
</dbReference>
<dbReference type="GO" id="GO:0006412">
    <property type="term" value="P:translation"/>
    <property type="evidence" value="ECO:0007669"/>
    <property type="project" value="UniProtKB-UniRule"/>
</dbReference>
<dbReference type="FunFam" id="2.40.30.10:FF:000004">
    <property type="entry name" value="50S ribosomal protein L3"/>
    <property type="match status" value="1"/>
</dbReference>
<dbReference type="FunFam" id="3.30.160.810:FF:000001">
    <property type="entry name" value="50S ribosomal protein L3"/>
    <property type="match status" value="1"/>
</dbReference>
<dbReference type="Gene3D" id="3.30.160.810">
    <property type="match status" value="1"/>
</dbReference>
<dbReference type="Gene3D" id="2.40.30.10">
    <property type="entry name" value="Translation factors"/>
    <property type="match status" value="1"/>
</dbReference>
<dbReference type="HAMAP" id="MF_01325_B">
    <property type="entry name" value="Ribosomal_uL3_B"/>
    <property type="match status" value="1"/>
</dbReference>
<dbReference type="InterPro" id="IPR000597">
    <property type="entry name" value="Ribosomal_uL3"/>
</dbReference>
<dbReference type="InterPro" id="IPR019927">
    <property type="entry name" value="Ribosomal_uL3_bac/org-type"/>
</dbReference>
<dbReference type="InterPro" id="IPR019926">
    <property type="entry name" value="Ribosomal_uL3_CS"/>
</dbReference>
<dbReference type="InterPro" id="IPR009000">
    <property type="entry name" value="Transl_B-barrel_sf"/>
</dbReference>
<dbReference type="NCBIfam" id="TIGR03625">
    <property type="entry name" value="L3_bact"/>
    <property type="match status" value="1"/>
</dbReference>
<dbReference type="PANTHER" id="PTHR11229">
    <property type="entry name" value="50S RIBOSOMAL PROTEIN L3"/>
    <property type="match status" value="1"/>
</dbReference>
<dbReference type="PANTHER" id="PTHR11229:SF16">
    <property type="entry name" value="LARGE RIBOSOMAL SUBUNIT PROTEIN UL3C"/>
    <property type="match status" value="1"/>
</dbReference>
<dbReference type="Pfam" id="PF00297">
    <property type="entry name" value="Ribosomal_L3"/>
    <property type="match status" value="1"/>
</dbReference>
<dbReference type="SUPFAM" id="SSF50447">
    <property type="entry name" value="Translation proteins"/>
    <property type="match status" value="1"/>
</dbReference>
<dbReference type="PROSITE" id="PS00474">
    <property type="entry name" value="RIBOSOMAL_L3"/>
    <property type="match status" value="1"/>
</dbReference>
<gene>
    <name evidence="1" type="primary">rplC</name>
    <name type="ordered locus">Cthe_2903</name>
</gene>
<protein>
    <recommendedName>
        <fullName evidence="1">Large ribosomal subunit protein uL3</fullName>
    </recommendedName>
    <alternativeName>
        <fullName evidence="2">50S ribosomal protein L3</fullName>
    </alternativeName>
</protein>
<keyword id="KW-1185">Reference proteome</keyword>
<keyword id="KW-0687">Ribonucleoprotein</keyword>
<keyword id="KW-0689">Ribosomal protein</keyword>
<keyword id="KW-0694">RNA-binding</keyword>
<keyword id="KW-0699">rRNA-binding</keyword>
<sequence length="212" mass="23567">MEKFMLGRKIGMTQVFDEDGLLIPVTVIEAGPITVVQKKKPETDGYNSVRVAFGDVQEKRLNKPEKGLFAKLGIAPKKYIREFRVDDPDKYELKQEIKVEEMFQPGDRVDVTGISKGKGFAGVIKRFGNRRGKETHGSMYHRRVGSMGANTNPARVFKGKKLPGHMGVERVTVQNLDVVKVDAERNLMLVKGAVPGAKGGLLMIKDTVKARK</sequence>
<evidence type="ECO:0000255" key="1">
    <source>
        <dbReference type="HAMAP-Rule" id="MF_01325"/>
    </source>
</evidence>
<evidence type="ECO:0000305" key="2"/>
<name>RL3_ACET2</name>
<reference key="1">
    <citation type="submission" date="2007-02" db="EMBL/GenBank/DDBJ databases">
        <title>Complete sequence of Clostridium thermocellum ATCC 27405.</title>
        <authorList>
            <consortium name="US DOE Joint Genome Institute"/>
            <person name="Copeland A."/>
            <person name="Lucas S."/>
            <person name="Lapidus A."/>
            <person name="Barry K."/>
            <person name="Detter J.C."/>
            <person name="Glavina del Rio T."/>
            <person name="Hammon N."/>
            <person name="Israni S."/>
            <person name="Dalin E."/>
            <person name="Tice H."/>
            <person name="Pitluck S."/>
            <person name="Chertkov O."/>
            <person name="Brettin T."/>
            <person name="Bruce D."/>
            <person name="Han C."/>
            <person name="Tapia R."/>
            <person name="Gilna P."/>
            <person name="Schmutz J."/>
            <person name="Larimer F."/>
            <person name="Land M."/>
            <person name="Hauser L."/>
            <person name="Kyrpides N."/>
            <person name="Mikhailova N."/>
            <person name="Wu J.H.D."/>
            <person name="Newcomb M."/>
            <person name="Richardson P."/>
        </authorList>
    </citation>
    <scope>NUCLEOTIDE SEQUENCE [LARGE SCALE GENOMIC DNA]</scope>
    <source>
        <strain>ATCC 27405 / DSM 1237 / JCM 9322 / NBRC 103400 / NCIMB 10682 / NRRL B-4536 / VPI 7372</strain>
    </source>
</reference>
<accession>A3DJH2</accession>
<comment type="function">
    <text evidence="1">One of the primary rRNA binding proteins, it binds directly near the 3'-end of the 23S rRNA, where it nucleates assembly of the 50S subunit.</text>
</comment>
<comment type="subunit">
    <text evidence="1">Part of the 50S ribosomal subunit. Forms a cluster with proteins L14 and L19.</text>
</comment>
<comment type="similarity">
    <text evidence="1">Belongs to the universal ribosomal protein uL3 family.</text>
</comment>